<protein>
    <recommendedName>
        <fullName>Chaperone Ric-8A</fullName>
    </recommendedName>
    <alternativeName>
        <fullName>Synembryn-A</fullName>
    </alternativeName>
</protein>
<reference key="1">
    <citation type="submission" date="2004-09" db="EMBL/GenBank/DDBJ databases">
        <authorList>
            <consortium name="NIH - Zebrafish Gene Collection (ZGC) project"/>
        </authorList>
    </citation>
    <scope>NUCLEOTIDE SEQUENCE [LARGE SCALE MRNA]</scope>
</reference>
<organism>
    <name type="scientific">Danio rerio</name>
    <name type="common">Zebrafish</name>
    <name type="synonym">Brachydanio rerio</name>
    <dbReference type="NCBI Taxonomy" id="7955"/>
    <lineage>
        <taxon>Eukaryota</taxon>
        <taxon>Metazoa</taxon>
        <taxon>Chordata</taxon>
        <taxon>Craniata</taxon>
        <taxon>Vertebrata</taxon>
        <taxon>Euteleostomi</taxon>
        <taxon>Actinopterygii</taxon>
        <taxon>Neopterygii</taxon>
        <taxon>Teleostei</taxon>
        <taxon>Ostariophysi</taxon>
        <taxon>Cypriniformes</taxon>
        <taxon>Danionidae</taxon>
        <taxon>Danioninae</taxon>
        <taxon>Danio</taxon>
    </lineage>
</organism>
<sequence>MDLNAIIEKMETGDQDAALTALQTYNKEKSQCFSFTSGEEEDRERLGELVLSFLERDLQPSCQLACLETIRILSRDKKSLSPFATRHAMQILIRHAGLGQGEGVTPEIPDLEVIVEALKCLCNIVFNSEAAQEAAADLQLMVGLAERLKQCREPQWNHDVRFFDLRLTFLITALRVDVRAQLAHELRGVSLLSEALDATFGLCWPDMYEVARAGFDGCSELPPLGRQETERVMEILKILFNVTFDSNRRHVDEEEAATYRHLGAILRHCIMSSAEGEERTEEMHSHTVNLLGNLPLPCLDVLLMPKVQQGSIEYMGVNMDAVKVLVEFMEKRLDRGNKLKETLLPSLNLLTESARIHRETRKFLRNKVLPPLRDVKNRPEVGNALRNKLVRLMTHIDTDVKHCAAEFLFVLCKESVSRFIKYTGYGNAAGLLAARGLMRGGRDPGHYSEDEDSDTEEYREAKPHINPVTGRVEEEQPNPMEGMTDEQKEYEAMKLVNMFDKLSREQVIQPMKIGADGKMTSMEPHELHHLASQQFGESNNSDSDSDTN</sequence>
<dbReference type="EMBL" id="BC081640">
    <property type="protein sequence ID" value="AAH81640.1"/>
    <property type="molecule type" value="mRNA"/>
</dbReference>
<dbReference type="RefSeq" id="NP_001005588.1">
    <property type="nucleotide sequence ID" value="NM_001005588.1"/>
</dbReference>
<dbReference type="SMR" id="Q642H7"/>
<dbReference type="FunCoup" id="Q642H7">
    <property type="interactions" value="1597"/>
</dbReference>
<dbReference type="STRING" id="7955.ENSDARP00000044737"/>
<dbReference type="PaxDb" id="7955-ENSDARP00000107651"/>
<dbReference type="GeneID" id="449546"/>
<dbReference type="KEGG" id="dre:449546"/>
<dbReference type="AGR" id="ZFIN:ZDB-GENE-040927-18"/>
<dbReference type="CTD" id="60626"/>
<dbReference type="ZFIN" id="ZDB-GENE-040927-18">
    <property type="gene designation" value="ric8a"/>
</dbReference>
<dbReference type="eggNOG" id="KOG4464">
    <property type="taxonomic scope" value="Eukaryota"/>
</dbReference>
<dbReference type="InParanoid" id="Q642H7"/>
<dbReference type="OrthoDB" id="5585685at2759"/>
<dbReference type="PRO" id="PR:Q642H7"/>
<dbReference type="Proteomes" id="UP000000437">
    <property type="component" value="Chromosome 25"/>
</dbReference>
<dbReference type="GO" id="GO:0005938">
    <property type="term" value="C:cell cortex"/>
    <property type="evidence" value="ECO:0007669"/>
    <property type="project" value="UniProtKB-SubCell"/>
</dbReference>
<dbReference type="GO" id="GO:0005737">
    <property type="term" value="C:cytoplasm"/>
    <property type="evidence" value="ECO:0000250"/>
    <property type="project" value="UniProtKB"/>
</dbReference>
<dbReference type="GO" id="GO:0005886">
    <property type="term" value="C:plasma membrane"/>
    <property type="evidence" value="ECO:0000250"/>
    <property type="project" value="UniProtKB"/>
</dbReference>
<dbReference type="GO" id="GO:0001965">
    <property type="term" value="F:G-protein alpha-subunit binding"/>
    <property type="evidence" value="ECO:0000250"/>
    <property type="project" value="UniProtKB"/>
</dbReference>
<dbReference type="GO" id="GO:0005085">
    <property type="term" value="F:guanyl-nucleotide exchange factor activity"/>
    <property type="evidence" value="ECO:0000250"/>
    <property type="project" value="UniProtKB"/>
</dbReference>
<dbReference type="GO" id="GO:0044183">
    <property type="term" value="F:protein folding chaperone"/>
    <property type="evidence" value="ECO:0000250"/>
    <property type="project" value="UniProtKB"/>
</dbReference>
<dbReference type="GO" id="GO:0007186">
    <property type="term" value="P:G protein-coupled receptor signaling pathway"/>
    <property type="evidence" value="ECO:0000250"/>
    <property type="project" value="UniProtKB"/>
</dbReference>
<dbReference type="FunFam" id="1.25.10.10:FF:000447">
    <property type="entry name" value="RIC8 guanine nucleotide exchange factor A"/>
    <property type="match status" value="1"/>
</dbReference>
<dbReference type="Gene3D" id="1.25.10.10">
    <property type="entry name" value="Leucine-rich Repeat Variant"/>
    <property type="match status" value="1"/>
</dbReference>
<dbReference type="InterPro" id="IPR011989">
    <property type="entry name" value="ARM-like"/>
</dbReference>
<dbReference type="InterPro" id="IPR016024">
    <property type="entry name" value="ARM-type_fold"/>
</dbReference>
<dbReference type="InterPro" id="IPR008376">
    <property type="entry name" value="Chaperone_Ric-8_A/B"/>
</dbReference>
<dbReference type="InterPro" id="IPR019318">
    <property type="entry name" value="Gua_nucleotide_exch_fac_Ric8"/>
</dbReference>
<dbReference type="PANTHER" id="PTHR12425">
    <property type="entry name" value="SYNEMBRYN"/>
    <property type="match status" value="1"/>
</dbReference>
<dbReference type="PANTHER" id="PTHR12425:SF4">
    <property type="entry name" value="SYNEMBRYN-A"/>
    <property type="match status" value="1"/>
</dbReference>
<dbReference type="Pfam" id="PF10165">
    <property type="entry name" value="Ric8"/>
    <property type="match status" value="1"/>
</dbReference>
<dbReference type="PRINTS" id="PR01802">
    <property type="entry name" value="SYNEMBRYN"/>
</dbReference>
<dbReference type="SUPFAM" id="SSF48371">
    <property type="entry name" value="ARM repeat"/>
    <property type="match status" value="1"/>
</dbReference>
<comment type="function">
    <text evidence="1">Chaperone that specifically binds and folds nascent G alpha proteins prior to G protein heterotrimer formation, promoting their stability and activity: folds GNAI1, GNAO1, GNA13 and GNAQ. Does not fold G(s) G-alpha proteins GNAS nor GNAL. Also acts as a guanine nucleotide exchange factor (GEF) for G alpha proteins by stimulating exchange of bound GDP for free GTP.</text>
</comment>
<comment type="subcellular location">
    <subcellularLocation>
        <location evidence="1">Cytoplasm</location>
        <location evidence="1">Cell cortex</location>
    </subcellularLocation>
    <subcellularLocation>
        <location evidence="1">Cytoplasm</location>
    </subcellularLocation>
</comment>
<comment type="similarity">
    <text evidence="3">Belongs to the synembryn family.</text>
</comment>
<feature type="chain" id="PRO_0000235896" description="Chaperone Ric-8A">
    <location>
        <begin position="1"/>
        <end position="548"/>
    </location>
</feature>
<feature type="region of interest" description="Disordered" evidence="2">
    <location>
        <begin position="443"/>
        <end position="484"/>
    </location>
</feature>
<feature type="region of interest" description="Disordered" evidence="2">
    <location>
        <begin position="517"/>
        <end position="548"/>
    </location>
</feature>
<proteinExistence type="evidence at transcript level"/>
<keyword id="KW-0143">Chaperone</keyword>
<keyword id="KW-0963">Cytoplasm</keyword>
<keyword id="KW-0344">Guanine-nucleotide releasing factor</keyword>
<keyword id="KW-1185">Reference proteome</keyword>
<gene>
    <name type="primary">ric8a</name>
    <name type="ORF">zgc:92294</name>
</gene>
<name>RIC8A_DANRE</name>
<evidence type="ECO:0000250" key="1">
    <source>
        <dbReference type="UniProtKB" id="Q80ZG1"/>
    </source>
</evidence>
<evidence type="ECO:0000256" key="2">
    <source>
        <dbReference type="SAM" id="MobiDB-lite"/>
    </source>
</evidence>
<evidence type="ECO:0000305" key="3"/>
<accession>Q642H7</accession>